<sequence length="334" mass="36181">MCDQYCISFADVEKAHINIRDFIHLTPVLTSSILNQITGRNLFFKCELFQKTGSFKIRGALNAIRGLISAHPEEKPRAVVAHSSGNHGQALSFAARLEGIPAYVIVPETAPNCKKLAIQAYGASIVYSEQSEESRENITKRIAEETEGIMVHPNQEPAVIAGQGTIAMEVLNQVPLVDALVVPVGGGGMLAGIAVTVKALRPSVKVYAAEPLNADDCYQSKLKGELTPNPYPPETIADGIKSSIGLNTWPIIRDLVDDVFTVTEDEIKYATQLVWERMKLLIEPTAGVGVAVVLSQHFRTVPAEVKNICIVLSGGNVDLTSLTWVKKQDEKAAP</sequence>
<evidence type="ECO:0000250" key="1">
    <source>
        <dbReference type="UniProtKB" id="O59791"/>
    </source>
</evidence>
<evidence type="ECO:0000250" key="2">
    <source>
        <dbReference type="UniProtKB" id="Q76EQ0"/>
    </source>
</evidence>
<evidence type="ECO:0000250" key="3">
    <source>
        <dbReference type="UniProtKB" id="Q9GZT4"/>
    </source>
</evidence>
<evidence type="ECO:0000250" key="4">
    <source>
        <dbReference type="UniProtKB" id="Q9QZX7"/>
    </source>
</evidence>
<evidence type="ECO:0000305" key="5"/>
<name>SRR_BOVIN</name>
<comment type="function">
    <text evidence="4">Catalyzes the synthesis of D-serine from L-serine. D-serine is a key coagonist with glutamate at NMDA receptors. Has dehydratase activity towards both L-serine and D-serine (By similarity).</text>
</comment>
<comment type="catalytic activity">
    <reaction evidence="4">
        <text>L-serine = D-serine</text>
        <dbReference type="Rhea" id="RHEA:10980"/>
        <dbReference type="ChEBI" id="CHEBI:33384"/>
        <dbReference type="ChEBI" id="CHEBI:35247"/>
        <dbReference type="EC" id="5.1.1.18"/>
    </reaction>
</comment>
<comment type="catalytic activity">
    <reaction evidence="4">
        <text>L-serine = pyruvate + NH4(+)</text>
        <dbReference type="Rhea" id="RHEA:19169"/>
        <dbReference type="ChEBI" id="CHEBI:15361"/>
        <dbReference type="ChEBI" id="CHEBI:28938"/>
        <dbReference type="ChEBI" id="CHEBI:33384"/>
        <dbReference type="EC" id="4.3.1.17"/>
    </reaction>
</comment>
<comment type="catalytic activity">
    <reaction evidence="4">
        <text>D-serine = pyruvate + NH4(+)</text>
        <dbReference type="Rhea" id="RHEA:13977"/>
        <dbReference type="ChEBI" id="CHEBI:15361"/>
        <dbReference type="ChEBI" id="CHEBI:28938"/>
        <dbReference type="ChEBI" id="CHEBI:35247"/>
        <dbReference type="EC" id="4.3.1.18"/>
    </reaction>
</comment>
<comment type="cofactor">
    <cofactor evidence="3">
        <name>Mg(2+)</name>
        <dbReference type="ChEBI" id="CHEBI:18420"/>
    </cofactor>
    <cofactor evidence="3">
        <name>Mn(2+)</name>
        <dbReference type="ChEBI" id="CHEBI:29035"/>
    </cofactor>
    <cofactor evidence="3">
        <name>Ca(2+)</name>
        <dbReference type="ChEBI" id="CHEBI:29108"/>
    </cofactor>
</comment>
<comment type="cofactor">
    <cofactor evidence="4">
        <name>pyridoxal 5'-phosphate</name>
        <dbReference type="ChEBI" id="CHEBI:597326"/>
    </cofactor>
</comment>
<comment type="subunit">
    <text evidence="3">Homodimer.</text>
</comment>
<comment type="PTM">
    <text evidence="4">S-nitrosylated, leading to decrease the enzyme activity.</text>
</comment>
<comment type="similarity">
    <text evidence="5">Belongs to the serine/threonine dehydratase family.</text>
</comment>
<dbReference type="EC" id="5.1.1.18" evidence="4"/>
<dbReference type="EC" id="4.3.1.18" evidence="4"/>
<dbReference type="EC" id="4.3.1.17" evidence="4"/>
<dbReference type="EMBL" id="BC126700">
    <property type="protein sequence ID" value="AAI26701.1"/>
    <property type="molecule type" value="mRNA"/>
</dbReference>
<dbReference type="RefSeq" id="NP_001071433.1">
    <property type="nucleotide sequence ID" value="NM_001077965.2"/>
</dbReference>
<dbReference type="RefSeq" id="XP_010814138.1">
    <property type="nucleotide sequence ID" value="XM_010815836.4"/>
</dbReference>
<dbReference type="RefSeq" id="XP_010814140.1">
    <property type="nucleotide sequence ID" value="XM_010815838.4"/>
</dbReference>
<dbReference type="RefSeq" id="XP_059734069.1">
    <property type="nucleotide sequence ID" value="XM_059878086.1"/>
</dbReference>
<dbReference type="SMR" id="A0JNI4"/>
<dbReference type="FunCoup" id="A0JNI4">
    <property type="interactions" value="583"/>
</dbReference>
<dbReference type="STRING" id="9913.ENSBTAP00000005532"/>
<dbReference type="PaxDb" id="9913-ENSBTAP00000005532"/>
<dbReference type="GeneID" id="525340"/>
<dbReference type="KEGG" id="bta:525340"/>
<dbReference type="CTD" id="63826"/>
<dbReference type="VEuPathDB" id="HostDB:ENSBTAG00000004223"/>
<dbReference type="eggNOG" id="KOG1251">
    <property type="taxonomic scope" value="Eukaryota"/>
</dbReference>
<dbReference type="HOGENOM" id="CLU_021152_4_2_1"/>
<dbReference type="InParanoid" id="A0JNI4"/>
<dbReference type="OMA" id="LIHPFDH"/>
<dbReference type="OrthoDB" id="4418812at2759"/>
<dbReference type="TreeFam" id="TF313346"/>
<dbReference type="Reactome" id="R-BTA-977347">
    <property type="pathway name" value="Serine biosynthesis"/>
</dbReference>
<dbReference type="Proteomes" id="UP000009136">
    <property type="component" value="Chromosome 19"/>
</dbReference>
<dbReference type="Bgee" id="ENSBTAG00000004223">
    <property type="expression patterns" value="Expressed in semen and 104 other cell types or tissues"/>
</dbReference>
<dbReference type="GO" id="GO:0005737">
    <property type="term" value="C:cytoplasm"/>
    <property type="evidence" value="ECO:0000318"/>
    <property type="project" value="GO_Central"/>
</dbReference>
<dbReference type="GO" id="GO:0005524">
    <property type="term" value="F:ATP binding"/>
    <property type="evidence" value="ECO:0000250"/>
    <property type="project" value="UniProtKB"/>
</dbReference>
<dbReference type="GO" id="GO:0008721">
    <property type="term" value="F:D-serine ammonia-lyase activity"/>
    <property type="evidence" value="ECO:0007669"/>
    <property type="project" value="UniProtKB-EC"/>
</dbReference>
<dbReference type="GO" id="GO:0003941">
    <property type="term" value="F:L-serine ammonia-lyase activity"/>
    <property type="evidence" value="ECO:0000318"/>
    <property type="project" value="GO_Central"/>
</dbReference>
<dbReference type="GO" id="GO:0000287">
    <property type="term" value="F:magnesium ion binding"/>
    <property type="evidence" value="ECO:0000250"/>
    <property type="project" value="UniProtKB"/>
</dbReference>
<dbReference type="GO" id="GO:0030170">
    <property type="term" value="F:pyridoxal phosphate binding"/>
    <property type="evidence" value="ECO:0000250"/>
    <property type="project" value="UniProtKB"/>
</dbReference>
<dbReference type="GO" id="GO:0030378">
    <property type="term" value="F:serine racemase activity"/>
    <property type="evidence" value="ECO:0000250"/>
    <property type="project" value="UniProtKB"/>
</dbReference>
<dbReference type="GO" id="GO:0018114">
    <property type="term" value="F:threonine racemase activity"/>
    <property type="evidence" value="ECO:0000318"/>
    <property type="project" value="GO_Central"/>
</dbReference>
<dbReference type="GO" id="GO:0070179">
    <property type="term" value="P:D-serine biosynthetic process"/>
    <property type="evidence" value="ECO:0000318"/>
    <property type="project" value="GO_Central"/>
</dbReference>
<dbReference type="GO" id="GO:0070178">
    <property type="term" value="P:D-serine metabolic process"/>
    <property type="evidence" value="ECO:0000250"/>
    <property type="project" value="UniProtKB"/>
</dbReference>
<dbReference type="GO" id="GO:0006563">
    <property type="term" value="P:L-serine metabolic process"/>
    <property type="evidence" value="ECO:0000250"/>
    <property type="project" value="UniProtKB"/>
</dbReference>
<dbReference type="CDD" id="cd01562">
    <property type="entry name" value="Thr-dehyd"/>
    <property type="match status" value="1"/>
</dbReference>
<dbReference type="FunFam" id="3.40.50.1100:FF:000005">
    <property type="entry name" value="Threonine dehydratase catabolic"/>
    <property type="match status" value="1"/>
</dbReference>
<dbReference type="Gene3D" id="3.40.50.1100">
    <property type="match status" value="2"/>
</dbReference>
<dbReference type="InterPro" id="IPR000634">
    <property type="entry name" value="Ser/Thr_deHydtase_PyrdxlP-BS"/>
</dbReference>
<dbReference type="InterPro" id="IPR001926">
    <property type="entry name" value="TrpB-like_PALP"/>
</dbReference>
<dbReference type="InterPro" id="IPR036052">
    <property type="entry name" value="TrpB-like_PALP_sf"/>
</dbReference>
<dbReference type="PANTHER" id="PTHR43050">
    <property type="entry name" value="SERINE / THREONINE RACEMASE FAMILY MEMBER"/>
    <property type="match status" value="1"/>
</dbReference>
<dbReference type="PANTHER" id="PTHR43050:SF1">
    <property type="entry name" value="SERINE RACEMASE"/>
    <property type="match status" value="1"/>
</dbReference>
<dbReference type="Pfam" id="PF00291">
    <property type="entry name" value="PALP"/>
    <property type="match status" value="1"/>
</dbReference>
<dbReference type="SUPFAM" id="SSF53686">
    <property type="entry name" value="Tryptophan synthase beta subunit-like PLP-dependent enzymes"/>
    <property type="match status" value="1"/>
</dbReference>
<dbReference type="PROSITE" id="PS00165">
    <property type="entry name" value="DEHYDRATASE_SER_THR"/>
    <property type="match status" value="1"/>
</dbReference>
<reference key="1">
    <citation type="submission" date="2006-10" db="EMBL/GenBank/DDBJ databases">
        <authorList>
            <consortium name="NIH - Mammalian Gene Collection (MGC) project"/>
        </authorList>
    </citation>
    <scope>NUCLEOTIDE SEQUENCE [LARGE SCALE MRNA]</scope>
    <source>
        <strain>Crossbred X Angus</strain>
        <tissue>Liver</tissue>
    </source>
</reference>
<accession>A0JNI4</accession>
<feature type="chain" id="PRO_0000286172" description="Serine racemase">
    <location>
        <begin position="1"/>
        <end position="334"/>
    </location>
</feature>
<feature type="active site" description="Proton acceptor" evidence="1">
    <location>
        <position position="56"/>
    </location>
</feature>
<feature type="active site" description="Proton acceptor" evidence="1">
    <location>
        <position position="84"/>
    </location>
</feature>
<feature type="binding site" evidence="3">
    <location>
        <position position="13"/>
    </location>
    <ligand>
        <name>Mg(2+)</name>
        <dbReference type="ChEBI" id="CHEBI:18420"/>
        <label>1</label>
    </ligand>
</feature>
<feature type="binding site" evidence="3">
    <location>
        <position position="31"/>
    </location>
    <ligand>
        <name>ATP</name>
        <dbReference type="ChEBI" id="CHEBI:30616"/>
    </ligand>
</feature>
<feature type="binding site" evidence="3">
    <location>
        <position position="32"/>
    </location>
    <ligand>
        <name>ATP</name>
        <dbReference type="ChEBI" id="CHEBI:30616"/>
    </ligand>
</feature>
<feature type="binding site" evidence="3">
    <location>
        <position position="33"/>
    </location>
    <ligand>
        <name>ATP</name>
        <dbReference type="ChEBI" id="CHEBI:30616"/>
    </ligand>
</feature>
<feature type="binding site" evidence="3">
    <location>
        <position position="51"/>
    </location>
    <ligand>
        <name>ATP</name>
        <dbReference type="ChEBI" id="CHEBI:30616"/>
    </ligand>
</feature>
<feature type="binding site" evidence="3">
    <location>
        <position position="52"/>
    </location>
    <ligand>
        <name>ATP</name>
        <dbReference type="ChEBI" id="CHEBI:30616"/>
    </ligand>
</feature>
<feature type="binding site" evidence="3">
    <location>
        <position position="86"/>
    </location>
    <ligand>
        <name>pyridoxal 5'-phosphate</name>
        <dbReference type="ChEBI" id="CHEBI:597326"/>
    </ligand>
</feature>
<feature type="binding site" evidence="3">
    <location>
        <position position="89"/>
    </location>
    <ligand>
        <name>ATP</name>
        <dbReference type="ChEBI" id="CHEBI:30616"/>
    </ligand>
</feature>
<feature type="binding site" evidence="3">
    <location>
        <position position="121"/>
    </location>
    <ligand>
        <name>ATP</name>
        <dbReference type="ChEBI" id="CHEBI:30616"/>
    </ligand>
</feature>
<feature type="binding site" evidence="2">
    <location>
        <position position="154"/>
    </location>
    <ligand>
        <name>pyridoxal 5'-phosphate</name>
        <dbReference type="ChEBI" id="CHEBI:597326"/>
    </ligand>
</feature>
<feature type="binding site" evidence="3">
    <location>
        <position position="178"/>
    </location>
    <ligand>
        <name>Mg(2+)</name>
        <dbReference type="ChEBI" id="CHEBI:18420"/>
        <label>2</label>
    </ligand>
</feature>
<feature type="binding site" evidence="3">
    <location>
        <position position="185"/>
    </location>
    <ligand>
        <name>pyridoxal 5'-phosphate</name>
        <dbReference type="ChEBI" id="CHEBI:597326"/>
    </ligand>
</feature>
<feature type="binding site" evidence="3">
    <location>
        <position position="186"/>
    </location>
    <ligand>
        <name>pyridoxal 5'-phosphate</name>
        <dbReference type="ChEBI" id="CHEBI:597326"/>
    </ligand>
</feature>
<feature type="binding site" evidence="3">
    <location>
        <position position="187"/>
    </location>
    <ligand>
        <name>pyridoxal 5'-phosphate</name>
        <dbReference type="ChEBI" id="CHEBI:597326"/>
    </ligand>
</feature>
<feature type="binding site" evidence="3">
    <location>
        <position position="188"/>
    </location>
    <ligand>
        <name>pyridoxal 5'-phosphate</name>
        <dbReference type="ChEBI" id="CHEBI:597326"/>
    </ligand>
</feature>
<feature type="binding site" evidence="3">
    <location>
        <position position="189"/>
    </location>
    <ligand>
        <name>pyridoxal 5'-phosphate</name>
        <dbReference type="ChEBI" id="CHEBI:597326"/>
    </ligand>
</feature>
<feature type="binding site" evidence="3">
    <location>
        <position position="210"/>
    </location>
    <ligand>
        <name>Ca(2+)</name>
        <dbReference type="ChEBI" id="CHEBI:29108"/>
        <label>3</label>
    </ligand>
</feature>
<feature type="binding site" evidence="3">
    <location>
        <position position="210"/>
    </location>
    <ligand>
        <name>Mg(2+)</name>
        <dbReference type="ChEBI" id="CHEBI:18420"/>
        <label>3</label>
    </ligand>
</feature>
<feature type="binding site" evidence="3">
    <location>
        <position position="210"/>
    </location>
    <ligand>
        <name>Mn(2+)</name>
        <dbReference type="ChEBI" id="CHEBI:29035"/>
    </ligand>
</feature>
<feature type="binding site" evidence="3">
    <location>
        <position position="214"/>
    </location>
    <ligand>
        <name>Ca(2+)</name>
        <dbReference type="ChEBI" id="CHEBI:29108"/>
        <label>3</label>
    </ligand>
</feature>
<feature type="binding site" evidence="3">
    <location>
        <position position="214"/>
    </location>
    <ligand>
        <name>Mg(2+)</name>
        <dbReference type="ChEBI" id="CHEBI:18420"/>
        <label>3</label>
    </ligand>
</feature>
<feature type="binding site" evidence="3">
    <location>
        <position position="214"/>
    </location>
    <ligand>
        <name>Mn(2+)</name>
        <dbReference type="ChEBI" id="CHEBI:29035"/>
    </ligand>
</feature>
<feature type="binding site" evidence="3">
    <location>
        <position position="216"/>
    </location>
    <ligand>
        <name>Ca(2+)</name>
        <dbReference type="ChEBI" id="CHEBI:29108"/>
        <label>3</label>
    </ligand>
</feature>
<feature type="binding site" evidence="3">
    <location>
        <position position="216"/>
    </location>
    <ligand>
        <name>Mg(2+)</name>
        <dbReference type="ChEBI" id="CHEBI:18420"/>
        <label>3</label>
    </ligand>
</feature>
<feature type="binding site" evidence="3">
    <location>
        <position position="216"/>
    </location>
    <ligand>
        <name>Mn(2+)</name>
        <dbReference type="ChEBI" id="CHEBI:29035"/>
    </ligand>
</feature>
<feature type="binding site" evidence="3">
    <location>
        <position position="247"/>
    </location>
    <ligand>
        <name>Ca(2+)</name>
        <dbReference type="ChEBI" id="CHEBI:29108"/>
        <label>4</label>
    </ligand>
</feature>
<feature type="binding site" evidence="3">
    <location>
        <position position="247"/>
    </location>
    <ligand>
        <name>Mg(2+)</name>
        <dbReference type="ChEBI" id="CHEBI:18420"/>
        <label>4</label>
    </ligand>
</feature>
<feature type="binding site" evidence="3">
    <location>
        <position position="279"/>
    </location>
    <ligand>
        <name>ATP</name>
        <dbReference type="ChEBI" id="CHEBI:30616"/>
    </ligand>
</feature>
<feature type="binding site" evidence="3">
    <location>
        <position position="313"/>
    </location>
    <ligand>
        <name>pyridoxal 5'-phosphate</name>
        <dbReference type="ChEBI" id="CHEBI:597326"/>
    </ligand>
</feature>
<feature type="binding site" evidence="3">
    <location>
        <position position="316"/>
    </location>
    <ligand>
        <name>ATP</name>
        <dbReference type="ChEBI" id="CHEBI:30616"/>
    </ligand>
</feature>
<feature type="modified residue" description="N6-(pyridoxal phosphate)lysine" evidence="3">
    <location>
        <position position="56"/>
    </location>
</feature>
<feature type="modified residue" description="S-nitrosocysteine" evidence="4">
    <location>
        <position position="113"/>
    </location>
</feature>
<keyword id="KW-0021">Allosteric enzyme</keyword>
<keyword id="KW-0067">ATP-binding</keyword>
<keyword id="KW-0106">Calcium</keyword>
<keyword id="KW-0413">Isomerase</keyword>
<keyword id="KW-0456">Lyase</keyword>
<keyword id="KW-0460">Magnesium</keyword>
<keyword id="KW-0464">Manganese</keyword>
<keyword id="KW-0479">Metal-binding</keyword>
<keyword id="KW-0547">Nucleotide-binding</keyword>
<keyword id="KW-0663">Pyridoxal phosphate</keyword>
<keyword id="KW-1185">Reference proteome</keyword>
<keyword id="KW-0702">S-nitrosylation</keyword>
<proteinExistence type="evidence at transcript level"/>
<organism>
    <name type="scientific">Bos taurus</name>
    <name type="common">Bovine</name>
    <dbReference type="NCBI Taxonomy" id="9913"/>
    <lineage>
        <taxon>Eukaryota</taxon>
        <taxon>Metazoa</taxon>
        <taxon>Chordata</taxon>
        <taxon>Craniata</taxon>
        <taxon>Vertebrata</taxon>
        <taxon>Euteleostomi</taxon>
        <taxon>Mammalia</taxon>
        <taxon>Eutheria</taxon>
        <taxon>Laurasiatheria</taxon>
        <taxon>Artiodactyla</taxon>
        <taxon>Ruminantia</taxon>
        <taxon>Pecora</taxon>
        <taxon>Bovidae</taxon>
        <taxon>Bovinae</taxon>
        <taxon>Bos</taxon>
    </lineage>
</organism>
<protein>
    <recommendedName>
        <fullName>Serine racemase</fullName>
        <ecNumber evidence="4">5.1.1.18</ecNumber>
    </recommendedName>
    <alternativeName>
        <fullName>D-serine ammonia-lyase</fullName>
    </alternativeName>
    <alternativeName>
        <fullName>D-serine dehydratase</fullName>
        <ecNumber evidence="4">4.3.1.18</ecNumber>
    </alternativeName>
    <alternativeName>
        <fullName>L-serine ammonia-lyase</fullName>
    </alternativeName>
    <alternativeName>
        <fullName>L-serine dehydratase</fullName>
        <ecNumber evidence="4">4.3.1.17</ecNumber>
    </alternativeName>
</protein>
<gene>
    <name type="primary">SRR</name>
</gene>